<evidence type="ECO:0000255" key="1">
    <source>
        <dbReference type="HAMAP-Rule" id="MF_00050"/>
    </source>
</evidence>
<organism>
    <name type="scientific">Dictyoglomus thermophilum (strain ATCC 35947 / DSM 3960 / H-6-12)</name>
    <dbReference type="NCBI Taxonomy" id="309799"/>
    <lineage>
        <taxon>Bacteria</taxon>
        <taxon>Pseudomonadati</taxon>
        <taxon>Dictyoglomota</taxon>
        <taxon>Dictyoglomia</taxon>
        <taxon>Dictyoglomales</taxon>
        <taxon>Dictyoglomaceae</taxon>
        <taxon>Dictyoglomus</taxon>
    </lineage>
</organism>
<feature type="chain" id="PRO_1000116726" description="Elongation factor Ts">
    <location>
        <begin position="1"/>
        <end position="198"/>
    </location>
</feature>
<feature type="region of interest" description="Involved in Mg(2+) ion dislocation from EF-Tu" evidence="1">
    <location>
        <begin position="81"/>
        <end position="84"/>
    </location>
</feature>
<comment type="function">
    <text evidence="1">Associates with the EF-Tu.GDP complex and induces the exchange of GDP to GTP. It remains bound to the aminoacyl-tRNA.EF-Tu.GTP complex up to the GTP hydrolysis stage on the ribosome.</text>
</comment>
<comment type="subcellular location">
    <subcellularLocation>
        <location evidence="1">Cytoplasm</location>
    </subcellularLocation>
</comment>
<comment type="similarity">
    <text evidence="1">Belongs to the EF-Ts family.</text>
</comment>
<sequence length="198" mass="22426">MEITIEMIKELRERTGAGVMEAKKALEEANGDMEKAVTILREKGVIKAAKKAGRVAKEGIIEAYIHTGDKLGVLVEVNCETDFVARTDEFRKLAKDIALQIAGMNPQYVSKEDVPPEVIEKEKEIYRTQLKNEGKPEHVIEKIIEGKLEKFYEEVCLLEQPFVRNPEIKVKDLITEAISKLGENIVVRRFARFVVGED</sequence>
<accession>B5YEG8</accession>
<dbReference type="EMBL" id="CP001146">
    <property type="protein sequence ID" value="ACI20078.1"/>
    <property type="molecule type" value="Genomic_DNA"/>
</dbReference>
<dbReference type="RefSeq" id="WP_012548710.1">
    <property type="nucleotide sequence ID" value="NC_011297.1"/>
</dbReference>
<dbReference type="SMR" id="B5YEG8"/>
<dbReference type="STRING" id="309799.DICTH_1077"/>
<dbReference type="PaxDb" id="309799-DICTH_1077"/>
<dbReference type="KEGG" id="dth:DICTH_1077"/>
<dbReference type="eggNOG" id="COG0264">
    <property type="taxonomic scope" value="Bacteria"/>
</dbReference>
<dbReference type="HOGENOM" id="CLU_047155_1_1_0"/>
<dbReference type="OrthoDB" id="9808348at2"/>
<dbReference type="Proteomes" id="UP000001733">
    <property type="component" value="Chromosome"/>
</dbReference>
<dbReference type="GO" id="GO:0005737">
    <property type="term" value="C:cytoplasm"/>
    <property type="evidence" value="ECO:0007669"/>
    <property type="project" value="UniProtKB-SubCell"/>
</dbReference>
<dbReference type="GO" id="GO:0003746">
    <property type="term" value="F:translation elongation factor activity"/>
    <property type="evidence" value="ECO:0007669"/>
    <property type="project" value="UniProtKB-UniRule"/>
</dbReference>
<dbReference type="CDD" id="cd14275">
    <property type="entry name" value="UBA_EF-Ts"/>
    <property type="match status" value="1"/>
</dbReference>
<dbReference type="FunFam" id="1.10.286.20:FF:000001">
    <property type="entry name" value="Elongation factor Ts"/>
    <property type="match status" value="1"/>
</dbReference>
<dbReference type="FunFam" id="1.10.8.10:FF:000001">
    <property type="entry name" value="Elongation factor Ts"/>
    <property type="match status" value="1"/>
</dbReference>
<dbReference type="Gene3D" id="1.10.286.20">
    <property type="match status" value="1"/>
</dbReference>
<dbReference type="Gene3D" id="1.10.8.10">
    <property type="entry name" value="DNA helicase RuvA subunit, C-terminal domain"/>
    <property type="match status" value="1"/>
</dbReference>
<dbReference type="Gene3D" id="3.30.479.20">
    <property type="entry name" value="Elongation factor Ts, dimerisation domain"/>
    <property type="match status" value="1"/>
</dbReference>
<dbReference type="HAMAP" id="MF_00050">
    <property type="entry name" value="EF_Ts"/>
    <property type="match status" value="1"/>
</dbReference>
<dbReference type="InterPro" id="IPR036402">
    <property type="entry name" value="EF-Ts_dimer_sf"/>
</dbReference>
<dbReference type="InterPro" id="IPR001816">
    <property type="entry name" value="Transl_elong_EFTs/EF1B"/>
</dbReference>
<dbReference type="InterPro" id="IPR014039">
    <property type="entry name" value="Transl_elong_EFTs/EF1B_dimer"/>
</dbReference>
<dbReference type="InterPro" id="IPR018101">
    <property type="entry name" value="Transl_elong_Ts_CS"/>
</dbReference>
<dbReference type="InterPro" id="IPR009060">
    <property type="entry name" value="UBA-like_sf"/>
</dbReference>
<dbReference type="NCBIfam" id="TIGR00116">
    <property type="entry name" value="tsf"/>
    <property type="match status" value="2"/>
</dbReference>
<dbReference type="PANTHER" id="PTHR11741">
    <property type="entry name" value="ELONGATION FACTOR TS"/>
    <property type="match status" value="1"/>
</dbReference>
<dbReference type="PANTHER" id="PTHR11741:SF0">
    <property type="entry name" value="ELONGATION FACTOR TS, MITOCHONDRIAL"/>
    <property type="match status" value="1"/>
</dbReference>
<dbReference type="Pfam" id="PF00889">
    <property type="entry name" value="EF_TS"/>
    <property type="match status" value="1"/>
</dbReference>
<dbReference type="SUPFAM" id="SSF54713">
    <property type="entry name" value="Elongation factor Ts (EF-Ts), dimerisation domain"/>
    <property type="match status" value="1"/>
</dbReference>
<dbReference type="SUPFAM" id="SSF46934">
    <property type="entry name" value="UBA-like"/>
    <property type="match status" value="1"/>
</dbReference>
<dbReference type="PROSITE" id="PS01126">
    <property type="entry name" value="EF_TS_1"/>
    <property type="match status" value="1"/>
</dbReference>
<dbReference type="PROSITE" id="PS01127">
    <property type="entry name" value="EF_TS_2"/>
    <property type="match status" value="1"/>
</dbReference>
<name>EFTS_DICT6</name>
<gene>
    <name evidence="1" type="primary">tsf</name>
    <name type="ordered locus">DICTH_1077</name>
</gene>
<keyword id="KW-0963">Cytoplasm</keyword>
<keyword id="KW-0251">Elongation factor</keyword>
<keyword id="KW-0648">Protein biosynthesis</keyword>
<proteinExistence type="inferred from homology"/>
<reference key="1">
    <citation type="journal article" date="2014" name="Genome Announc.">
        <title>Complete Genome Sequence of the Extreme Thermophile Dictyoglomus thermophilum H-6-12.</title>
        <authorList>
            <person name="Coil D.A."/>
            <person name="Badger J.H."/>
            <person name="Forberger H.C."/>
            <person name="Riggs F."/>
            <person name="Madupu R."/>
            <person name="Fedorova N."/>
            <person name="Ward N."/>
            <person name="Robb F.T."/>
            <person name="Eisen J.A."/>
        </authorList>
    </citation>
    <scope>NUCLEOTIDE SEQUENCE [LARGE SCALE GENOMIC DNA]</scope>
    <source>
        <strain>ATCC 35947 / DSM 3960 / H-6-12</strain>
    </source>
</reference>
<protein>
    <recommendedName>
        <fullName evidence="1">Elongation factor Ts</fullName>
        <shortName evidence="1">EF-Ts</shortName>
    </recommendedName>
</protein>